<feature type="initiator methionine" description="Removed" evidence="1">
    <location>
        <position position="1"/>
    </location>
</feature>
<feature type="chain" id="PRO_0000081764" description="RNA-binding protein 8A">
    <location>
        <begin position="2"/>
        <end position="174"/>
    </location>
</feature>
<feature type="domain" description="RRM" evidence="2">
    <location>
        <begin position="73"/>
        <end position="151"/>
    </location>
</feature>
<feature type="region of interest" description="Disordered" evidence="3">
    <location>
        <begin position="1"/>
        <end position="70"/>
    </location>
</feature>
<feature type="region of interest" description="Disordered" evidence="3">
    <location>
        <begin position="151"/>
        <end position="174"/>
    </location>
</feature>
<feature type="compositionally biased region" description="Basic and acidic residues" evidence="3">
    <location>
        <begin position="1"/>
        <end position="11"/>
    </location>
</feature>
<feature type="compositionally biased region" description="Basic residues" evidence="3">
    <location>
        <begin position="28"/>
        <end position="38"/>
    </location>
</feature>
<feature type="compositionally biased region" description="Basic and acidic residues" evidence="3">
    <location>
        <begin position="44"/>
        <end position="54"/>
    </location>
</feature>
<feature type="compositionally biased region" description="Basic residues" evidence="3">
    <location>
        <begin position="155"/>
        <end position="174"/>
    </location>
</feature>
<feature type="modified residue" description="N-acetylalanine" evidence="1">
    <location>
        <position position="2"/>
    </location>
</feature>
<feature type="modified residue" description="Phosphoserine" evidence="1">
    <location>
        <position position="24"/>
    </location>
</feature>
<feature type="modified residue" description="Phosphoserine" evidence="1">
    <location>
        <position position="42"/>
    </location>
</feature>
<feature type="modified residue" description="Phosphoserine" evidence="7">
    <location>
        <position position="56"/>
    </location>
</feature>
<feature type="cross-link" description="Glycyl lysine isopeptide (Lys-Gly) (interchain with G-Cter in SUMO2)" evidence="1">
    <location>
        <position position="27"/>
    </location>
</feature>
<feature type="splice variant" id="VSP_010251" description="In isoform 2." evidence="4 5">
    <location>
        <position position="43"/>
    </location>
</feature>
<feature type="sequence conflict" description="In Ref. 2; BAB26605." evidence="6" ref="2">
    <original>D</original>
    <variation>N</variation>
    <location>
        <position position="14"/>
    </location>
</feature>
<feature type="sequence conflict" description="In Ref. 2; BAE24142 and 5; AAI32652." ref="2 5">
    <original>E</original>
    <variation>K</variation>
    <location>
        <position position="43"/>
    </location>
</feature>
<feature type="sequence conflict" description="In Ref. 2; BAE24142 and 5; AAI32652/AAI32654." evidence="6" ref="2 5">
    <original>R</original>
    <variation>Q</variation>
    <location>
        <position position="51"/>
    </location>
</feature>
<feature type="sequence conflict" description="In Ref. 2; BAE24142 and 5; AAI32652/AAI32654." evidence="6" ref="2 5">
    <original>E</original>
    <variation>K</variation>
    <location>
        <position position="58"/>
    </location>
</feature>
<feature type="sequence conflict" description="In Ref. 2; BAE24142 and 5; AAI32652/AAI32654." evidence="6" ref="2 5">
    <original>G</original>
    <variation>S</variation>
    <location>
        <position position="61"/>
    </location>
</feature>
<reference key="1">
    <citation type="journal article" date="2014" name="PLoS ONE">
        <title>Slow co-evolution of the MAGO and Y14 protein families is required for the maintenance of their obligate heterodimerization mode.</title>
        <authorList>
            <person name="Gong P."/>
            <person name="Zhao M."/>
            <person name="He C."/>
        </authorList>
    </citation>
    <scope>NUCLEOTIDE SEQUENCE [MRNA] (ISOFORM 1)</scope>
</reference>
<reference key="2">
    <citation type="journal article" date="2005" name="Science">
        <title>The transcriptional landscape of the mammalian genome.</title>
        <authorList>
            <person name="Carninci P."/>
            <person name="Kasukawa T."/>
            <person name="Katayama S."/>
            <person name="Gough J."/>
            <person name="Frith M.C."/>
            <person name="Maeda N."/>
            <person name="Oyama R."/>
            <person name="Ravasi T."/>
            <person name="Lenhard B."/>
            <person name="Wells C."/>
            <person name="Kodzius R."/>
            <person name="Shimokawa K."/>
            <person name="Bajic V.B."/>
            <person name="Brenner S.E."/>
            <person name="Batalov S."/>
            <person name="Forrest A.R."/>
            <person name="Zavolan M."/>
            <person name="Davis M.J."/>
            <person name="Wilming L.G."/>
            <person name="Aidinis V."/>
            <person name="Allen J.E."/>
            <person name="Ambesi-Impiombato A."/>
            <person name="Apweiler R."/>
            <person name="Aturaliya R.N."/>
            <person name="Bailey T.L."/>
            <person name="Bansal M."/>
            <person name="Baxter L."/>
            <person name="Beisel K.W."/>
            <person name="Bersano T."/>
            <person name="Bono H."/>
            <person name="Chalk A.M."/>
            <person name="Chiu K.P."/>
            <person name="Choudhary V."/>
            <person name="Christoffels A."/>
            <person name="Clutterbuck D.R."/>
            <person name="Crowe M.L."/>
            <person name="Dalla E."/>
            <person name="Dalrymple B.P."/>
            <person name="de Bono B."/>
            <person name="Della Gatta G."/>
            <person name="di Bernardo D."/>
            <person name="Down T."/>
            <person name="Engstrom P."/>
            <person name="Fagiolini M."/>
            <person name="Faulkner G."/>
            <person name="Fletcher C.F."/>
            <person name="Fukushima T."/>
            <person name="Furuno M."/>
            <person name="Futaki S."/>
            <person name="Gariboldi M."/>
            <person name="Georgii-Hemming P."/>
            <person name="Gingeras T.R."/>
            <person name="Gojobori T."/>
            <person name="Green R.E."/>
            <person name="Gustincich S."/>
            <person name="Harbers M."/>
            <person name="Hayashi Y."/>
            <person name="Hensch T.K."/>
            <person name="Hirokawa N."/>
            <person name="Hill D."/>
            <person name="Huminiecki L."/>
            <person name="Iacono M."/>
            <person name="Ikeo K."/>
            <person name="Iwama A."/>
            <person name="Ishikawa T."/>
            <person name="Jakt M."/>
            <person name="Kanapin A."/>
            <person name="Katoh M."/>
            <person name="Kawasawa Y."/>
            <person name="Kelso J."/>
            <person name="Kitamura H."/>
            <person name="Kitano H."/>
            <person name="Kollias G."/>
            <person name="Krishnan S.P."/>
            <person name="Kruger A."/>
            <person name="Kummerfeld S.K."/>
            <person name="Kurochkin I.V."/>
            <person name="Lareau L.F."/>
            <person name="Lazarevic D."/>
            <person name="Lipovich L."/>
            <person name="Liu J."/>
            <person name="Liuni S."/>
            <person name="McWilliam S."/>
            <person name="Madan Babu M."/>
            <person name="Madera M."/>
            <person name="Marchionni L."/>
            <person name="Matsuda H."/>
            <person name="Matsuzawa S."/>
            <person name="Miki H."/>
            <person name="Mignone F."/>
            <person name="Miyake S."/>
            <person name="Morris K."/>
            <person name="Mottagui-Tabar S."/>
            <person name="Mulder N."/>
            <person name="Nakano N."/>
            <person name="Nakauchi H."/>
            <person name="Ng P."/>
            <person name="Nilsson R."/>
            <person name="Nishiguchi S."/>
            <person name="Nishikawa S."/>
            <person name="Nori F."/>
            <person name="Ohara O."/>
            <person name="Okazaki Y."/>
            <person name="Orlando V."/>
            <person name="Pang K.C."/>
            <person name="Pavan W.J."/>
            <person name="Pavesi G."/>
            <person name="Pesole G."/>
            <person name="Petrovsky N."/>
            <person name="Piazza S."/>
            <person name="Reed J."/>
            <person name="Reid J.F."/>
            <person name="Ring B.Z."/>
            <person name="Ringwald M."/>
            <person name="Rost B."/>
            <person name="Ruan Y."/>
            <person name="Salzberg S.L."/>
            <person name="Sandelin A."/>
            <person name="Schneider C."/>
            <person name="Schoenbach C."/>
            <person name="Sekiguchi K."/>
            <person name="Semple C.A."/>
            <person name="Seno S."/>
            <person name="Sessa L."/>
            <person name="Sheng Y."/>
            <person name="Shibata Y."/>
            <person name="Shimada H."/>
            <person name="Shimada K."/>
            <person name="Silva D."/>
            <person name="Sinclair B."/>
            <person name="Sperling S."/>
            <person name="Stupka E."/>
            <person name="Sugiura K."/>
            <person name="Sultana R."/>
            <person name="Takenaka Y."/>
            <person name="Taki K."/>
            <person name="Tammoja K."/>
            <person name="Tan S.L."/>
            <person name="Tang S."/>
            <person name="Taylor M.S."/>
            <person name="Tegner J."/>
            <person name="Teichmann S.A."/>
            <person name="Ueda H.R."/>
            <person name="van Nimwegen E."/>
            <person name="Verardo R."/>
            <person name="Wei C.L."/>
            <person name="Yagi K."/>
            <person name="Yamanishi H."/>
            <person name="Zabarovsky E."/>
            <person name="Zhu S."/>
            <person name="Zimmer A."/>
            <person name="Hide W."/>
            <person name="Bult C."/>
            <person name="Grimmond S.M."/>
            <person name="Teasdale R.D."/>
            <person name="Liu E.T."/>
            <person name="Brusic V."/>
            <person name="Quackenbush J."/>
            <person name="Wahlestedt C."/>
            <person name="Mattick J.S."/>
            <person name="Hume D.A."/>
            <person name="Kai C."/>
            <person name="Sasaki D."/>
            <person name="Tomaru Y."/>
            <person name="Fukuda S."/>
            <person name="Kanamori-Katayama M."/>
            <person name="Suzuki M."/>
            <person name="Aoki J."/>
            <person name="Arakawa T."/>
            <person name="Iida J."/>
            <person name="Imamura K."/>
            <person name="Itoh M."/>
            <person name="Kato T."/>
            <person name="Kawaji H."/>
            <person name="Kawagashira N."/>
            <person name="Kawashima T."/>
            <person name="Kojima M."/>
            <person name="Kondo S."/>
            <person name="Konno H."/>
            <person name="Nakano K."/>
            <person name="Ninomiya N."/>
            <person name="Nishio T."/>
            <person name="Okada M."/>
            <person name="Plessy C."/>
            <person name="Shibata K."/>
            <person name="Shiraki T."/>
            <person name="Suzuki S."/>
            <person name="Tagami M."/>
            <person name="Waki K."/>
            <person name="Watahiki A."/>
            <person name="Okamura-Oho Y."/>
            <person name="Suzuki H."/>
            <person name="Kawai J."/>
            <person name="Hayashizaki Y."/>
        </authorList>
    </citation>
    <scope>NUCLEOTIDE SEQUENCE [LARGE SCALE MRNA] (ISOFORMS 1 AND 2)</scope>
    <source>
        <strain>C57BL/6J</strain>
        <tissue>Egg</tissue>
        <tissue>Tongue</tissue>
    </source>
</reference>
<reference key="3">
    <citation type="journal article" date="2009" name="PLoS Biol.">
        <title>Lineage-specific biology revealed by a finished genome assembly of the mouse.</title>
        <authorList>
            <person name="Church D.M."/>
            <person name="Goodstadt L."/>
            <person name="Hillier L.W."/>
            <person name="Zody M.C."/>
            <person name="Goldstein S."/>
            <person name="She X."/>
            <person name="Bult C.J."/>
            <person name="Agarwala R."/>
            <person name="Cherry J.L."/>
            <person name="DiCuccio M."/>
            <person name="Hlavina W."/>
            <person name="Kapustin Y."/>
            <person name="Meric P."/>
            <person name="Maglott D."/>
            <person name="Birtle Z."/>
            <person name="Marques A.C."/>
            <person name="Graves T."/>
            <person name="Zhou S."/>
            <person name="Teague B."/>
            <person name="Potamousis K."/>
            <person name="Churas C."/>
            <person name="Place M."/>
            <person name="Herschleb J."/>
            <person name="Runnheim R."/>
            <person name="Forrest D."/>
            <person name="Amos-Landgraf J."/>
            <person name="Schwartz D.C."/>
            <person name="Cheng Z."/>
            <person name="Lindblad-Toh K."/>
            <person name="Eichler E.E."/>
            <person name="Ponting C.P."/>
        </authorList>
    </citation>
    <scope>NUCLEOTIDE SEQUENCE [LARGE SCALE GENOMIC DNA]</scope>
    <source>
        <strain>C57BL/6J</strain>
    </source>
</reference>
<reference key="4">
    <citation type="submission" date="2005-07" db="EMBL/GenBank/DDBJ databases">
        <authorList>
            <person name="Mural R.J."/>
            <person name="Adams M.D."/>
            <person name="Myers E.W."/>
            <person name="Smith H.O."/>
            <person name="Venter J.C."/>
        </authorList>
    </citation>
    <scope>NUCLEOTIDE SEQUENCE [LARGE SCALE GENOMIC DNA]</scope>
</reference>
<reference key="5">
    <citation type="journal article" date="2004" name="Genome Res.">
        <title>The status, quality, and expansion of the NIH full-length cDNA project: the Mammalian Gene Collection (MGC).</title>
        <authorList>
            <consortium name="The MGC Project Team"/>
        </authorList>
    </citation>
    <scope>NUCLEOTIDE SEQUENCE [LARGE SCALE MRNA] (ISOFORMS 1 AND 2)</scope>
    <source>
        <strain>C57BL/6J</strain>
        <tissue>Brain</tissue>
        <tissue>Mammary tumor</tissue>
    </source>
</reference>
<reference key="6">
    <citation type="journal article" date="2009" name="Immunity">
        <title>The phagosomal proteome in interferon-gamma-activated macrophages.</title>
        <authorList>
            <person name="Trost M."/>
            <person name="English L."/>
            <person name="Lemieux S."/>
            <person name="Courcelles M."/>
            <person name="Desjardins M."/>
            <person name="Thibault P."/>
        </authorList>
    </citation>
    <scope>IDENTIFICATION BY MASS SPECTROMETRY [LARGE SCALE ANALYSIS]</scope>
</reference>
<reference key="7">
    <citation type="journal article" date="2010" name="Cell">
        <title>A tissue-specific atlas of mouse protein phosphorylation and expression.</title>
        <authorList>
            <person name="Huttlin E.L."/>
            <person name="Jedrychowski M.P."/>
            <person name="Elias J.E."/>
            <person name="Goswami T."/>
            <person name="Rad R."/>
            <person name="Beausoleil S.A."/>
            <person name="Villen J."/>
            <person name="Haas W."/>
            <person name="Sowa M.E."/>
            <person name="Gygi S.P."/>
        </authorList>
    </citation>
    <scope>PHOSPHORYLATION [LARGE SCALE ANALYSIS] AT SER-56</scope>
    <scope>IDENTIFICATION BY MASS SPECTROMETRY [LARGE SCALE ANALYSIS]</scope>
    <source>
        <tissue>Brain</tissue>
        <tissue>Brown adipose tissue</tissue>
        <tissue>Heart</tissue>
        <tissue>Kidney</tissue>
        <tissue>Liver</tissue>
        <tissue>Lung</tissue>
        <tissue>Pancreas</tissue>
        <tissue>Spleen</tissue>
        <tissue>Testis</tissue>
    </source>
</reference>
<dbReference type="EMBL" id="KF051021">
    <property type="protein sequence ID" value="AHX83807.1"/>
    <property type="molecule type" value="mRNA"/>
</dbReference>
<dbReference type="EMBL" id="AK009953">
    <property type="protein sequence ID" value="BAB26605.1"/>
    <property type="molecule type" value="mRNA"/>
</dbReference>
<dbReference type="EMBL" id="AK010284">
    <property type="protein sequence ID" value="BAB26820.1"/>
    <property type="molecule type" value="mRNA"/>
</dbReference>
<dbReference type="EMBL" id="AK082925">
    <property type="protein sequence ID" value="BAC38693.1"/>
    <property type="molecule type" value="mRNA"/>
</dbReference>
<dbReference type="EMBL" id="AK139805">
    <property type="protein sequence ID" value="BAE24142.1"/>
    <property type="molecule type" value="mRNA"/>
</dbReference>
<dbReference type="EMBL" id="AC122037">
    <property type="status" value="NOT_ANNOTATED_CDS"/>
    <property type="molecule type" value="Genomic_DNA"/>
</dbReference>
<dbReference type="EMBL" id="CH466620">
    <property type="protein sequence ID" value="EDL38900.1"/>
    <property type="molecule type" value="Genomic_DNA"/>
</dbReference>
<dbReference type="EMBL" id="BC020086">
    <property type="protein sequence ID" value="AAH20086.1"/>
    <property type="molecule type" value="mRNA"/>
</dbReference>
<dbReference type="EMBL" id="BC058376">
    <property type="protein sequence ID" value="AAH58376.1"/>
    <property type="molecule type" value="mRNA"/>
</dbReference>
<dbReference type="EMBL" id="BC132651">
    <property type="protein sequence ID" value="AAI32652.1"/>
    <property type="molecule type" value="mRNA"/>
</dbReference>
<dbReference type="EMBL" id="BC132653">
    <property type="protein sequence ID" value="AAI32654.1"/>
    <property type="molecule type" value="mRNA"/>
</dbReference>
<dbReference type="CCDS" id="CCDS51005.1">
    <molecule id="Q9CWZ3-1"/>
</dbReference>
<dbReference type="CCDS" id="CCDS79983.1">
    <molecule id="Q9CWZ3-2"/>
</dbReference>
<dbReference type="RefSeq" id="NP_001095877.1">
    <molecule id="Q9CWZ3-1"/>
    <property type="nucleotide sequence ID" value="NM_001102407.1"/>
</dbReference>
<dbReference type="RefSeq" id="NP_080151.2">
    <molecule id="Q9CWZ3-2"/>
    <property type="nucleotide sequence ID" value="NM_025875.2"/>
</dbReference>
<dbReference type="SMR" id="Q9CWZ3"/>
<dbReference type="BioGRID" id="208557">
    <property type="interactions" value="83"/>
</dbReference>
<dbReference type="ComplexPortal" id="CPX-635">
    <property type="entry name" value="Exon junction core complex, Magoh variant"/>
</dbReference>
<dbReference type="ComplexPortal" id="CPX-638">
    <property type="entry name" value="Exon junction subcomplex magoh-y14"/>
</dbReference>
<dbReference type="ComplexPortal" id="CPX-681">
    <property type="entry name" value="Exon junction subcomplex Magohb-Y14"/>
</dbReference>
<dbReference type="ComplexPortal" id="CPX-683">
    <property type="entry name" value="Exon junction core complex, Magohb variant"/>
</dbReference>
<dbReference type="FunCoup" id="Q9CWZ3">
    <property type="interactions" value="4377"/>
</dbReference>
<dbReference type="IntAct" id="Q9CWZ3">
    <property type="interactions" value="39"/>
</dbReference>
<dbReference type="STRING" id="10090.ENSMUSP00000143190"/>
<dbReference type="iPTMnet" id="Q9CWZ3"/>
<dbReference type="PhosphoSitePlus" id="Q9CWZ3"/>
<dbReference type="SwissPalm" id="Q9CWZ3"/>
<dbReference type="jPOST" id="Q9CWZ3"/>
<dbReference type="PaxDb" id="10090-ENSMUSP00000044548"/>
<dbReference type="PeptideAtlas" id="Q9CWZ3"/>
<dbReference type="ProteomicsDB" id="255041">
    <molecule id="Q9CWZ3-1"/>
</dbReference>
<dbReference type="ProteomicsDB" id="255042">
    <molecule id="Q9CWZ3-2"/>
</dbReference>
<dbReference type="Pumba" id="Q9CWZ3"/>
<dbReference type="DNASU" id="60365"/>
<dbReference type="Ensembl" id="ENSMUST00000048915.11">
    <molecule id="Q9CWZ3-2"/>
    <property type="protein sequence ID" value="ENSMUSP00000044548.8"/>
    <property type="gene ID" value="ENSMUSG00000038374.11"/>
</dbReference>
<dbReference type="Ensembl" id="ENSMUST00000196456.5">
    <molecule id="Q9CWZ3-1"/>
    <property type="protein sequence ID" value="ENSMUSP00000143190.2"/>
    <property type="gene ID" value="ENSMUSG00000038374.11"/>
</dbReference>
<dbReference type="GeneID" id="60365"/>
<dbReference type="KEGG" id="mmu:60365"/>
<dbReference type="UCSC" id="uc007dty.3">
    <molecule id="Q9CWZ3-1"/>
    <property type="organism name" value="mouse"/>
</dbReference>
<dbReference type="UCSC" id="uc008qnk.2">
    <molecule id="Q9CWZ3-2"/>
    <property type="organism name" value="mouse"/>
</dbReference>
<dbReference type="UCSC" id="uc008qnl.2">
    <property type="organism name" value="mouse"/>
</dbReference>
<dbReference type="AGR" id="MGI:1913129"/>
<dbReference type="CTD" id="9939"/>
<dbReference type="MGI" id="MGI:1913129">
    <property type="gene designation" value="Rbm8a"/>
</dbReference>
<dbReference type="VEuPathDB" id="HostDB:ENSMUSG00000038374"/>
<dbReference type="eggNOG" id="KOG0130">
    <property type="taxonomic scope" value="Eukaryota"/>
</dbReference>
<dbReference type="GeneTree" id="ENSGT00730000111185"/>
<dbReference type="InParanoid" id="Q9CWZ3"/>
<dbReference type="OMA" id="IYNHEEF"/>
<dbReference type="OrthoDB" id="15688at2759"/>
<dbReference type="PhylomeDB" id="Q9CWZ3"/>
<dbReference type="TreeFam" id="TF314933"/>
<dbReference type="Reactome" id="R-MMU-159236">
    <property type="pathway name" value="Transport of Mature mRNA derived from an Intron-Containing Transcript"/>
</dbReference>
<dbReference type="Reactome" id="R-MMU-72163">
    <property type="pathway name" value="mRNA Splicing - Major Pathway"/>
</dbReference>
<dbReference type="Reactome" id="R-MMU-72187">
    <property type="pathway name" value="mRNA 3'-end processing"/>
</dbReference>
<dbReference type="Reactome" id="R-MMU-73856">
    <property type="pathway name" value="RNA Polymerase II Transcription Termination"/>
</dbReference>
<dbReference type="Reactome" id="R-MMU-975957">
    <property type="pathway name" value="Nonsense Mediated Decay (NMD) enhanced by the Exon Junction Complex (EJC)"/>
</dbReference>
<dbReference type="BioGRID-ORCS" id="60365">
    <property type="hits" value="16 hits in 49 CRISPR screens"/>
</dbReference>
<dbReference type="CD-CODE" id="DE1E139C">
    <property type="entry name" value="Chromatoid body"/>
</dbReference>
<dbReference type="ChiTaRS" id="Rbm8a">
    <property type="organism name" value="mouse"/>
</dbReference>
<dbReference type="PRO" id="PR:Q9CWZ3"/>
<dbReference type="Proteomes" id="UP000000589">
    <property type="component" value="Chromosome 3"/>
</dbReference>
<dbReference type="RNAct" id="Q9CWZ3">
    <property type="molecule type" value="protein"/>
</dbReference>
<dbReference type="Bgee" id="ENSMUSG00000038374">
    <property type="expression patterns" value="Expressed in dorsal pancreas and 229 other cell types or tissues"/>
</dbReference>
<dbReference type="ExpressionAtlas" id="Q9CWZ3">
    <property type="expression patterns" value="baseline and differential"/>
</dbReference>
<dbReference type="GO" id="GO:0005829">
    <property type="term" value="C:cytosol"/>
    <property type="evidence" value="ECO:0000303"/>
    <property type="project" value="ComplexPortal"/>
</dbReference>
<dbReference type="GO" id="GO:0035145">
    <property type="term" value="C:exon-exon junction complex"/>
    <property type="evidence" value="ECO:0000266"/>
    <property type="project" value="ComplexPortal"/>
</dbReference>
<dbReference type="GO" id="GO:1990501">
    <property type="term" value="C:exon-exon junction subcomplex mago-y14"/>
    <property type="evidence" value="ECO:0000266"/>
    <property type="project" value="ComplexPortal"/>
</dbReference>
<dbReference type="GO" id="GO:0016607">
    <property type="term" value="C:nuclear speck"/>
    <property type="evidence" value="ECO:0007669"/>
    <property type="project" value="UniProtKB-SubCell"/>
</dbReference>
<dbReference type="GO" id="GO:0005634">
    <property type="term" value="C:nucleus"/>
    <property type="evidence" value="ECO:0000314"/>
    <property type="project" value="MGI"/>
</dbReference>
<dbReference type="GO" id="GO:0071006">
    <property type="term" value="C:U2-type catalytic step 1 spliceosome"/>
    <property type="evidence" value="ECO:0000250"/>
    <property type="project" value="UniProtKB"/>
</dbReference>
<dbReference type="GO" id="GO:0003729">
    <property type="term" value="F:mRNA binding"/>
    <property type="evidence" value="ECO:0000314"/>
    <property type="project" value="MGI"/>
</dbReference>
<dbReference type="GO" id="GO:0006406">
    <property type="term" value="P:mRNA export from nucleus"/>
    <property type="evidence" value="ECO:0000303"/>
    <property type="project" value="ComplexPortal"/>
</dbReference>
<dbReference type="GO" id="GO:0000398">
    <property type="term" value="P:mRNA splicing, via spliceosome"/>
    <property type="evidence" value="ECO:0000250"/>
    <property type="project" value="UniProtKB"/>
</dbReference>
<dbReference type="GO" id="GO:0000184">
    <property type="term" value="P:nuclear-transcribed mRNA catabolic process, nonsense-mediated decay"/>
    <property type="evidence" value="ECO:0007669"/>
    <property type="project" value="UniProtKB-KW"/>
</dbReference>
<dbReference type="GO" id="GO:0000381">
    <property type="term" value="P:regulation of alternative mRNA splicing, via spliceosome"/>
    <property type="evidence" value="ECO:0000250"/>
    <property type="project" value="UniProtKB"/>
</dbReference>
<dbReference type="GO" id="GO:0050684">
    <property type="term" value="P:regulation of mRNA processing"/>
    <property type="evidence" value="ECO:0000266"/>
    <property type="project" value="ComplexPortal"/>
</dbReference>
<dbReference type="GO" id="GO:2000622">
    <property type="term" value="P:regulation of nuclear-transcribed mRNA catabolic process, nonsense-mediated decay"/>
    <property type="evidence" value="ECO:0000266"/>
    <property type="project" value="ComplexPortal"/>
</dbReference>
<dbReference type="GO" id="GO:0006417">
    <property type="term" value="P:regulation of translation"/>
    <property type="evidence" value="ECO:0007669"/>
    <property type="project" value="UniProtKB-KW"/>
</dbReference>
<dbReference type="CDD" id="cd12324">
    <property type="entry name" value="RRM_RBM8"/>
    <property type="match status" value="1"/>
</dbReference>
<dbReference type="FunFam" id="3.30.70.330:FF:000157">
    <property type="entry name" value="RNA-binding protein 8A"/>
    <property type="match status" value="1"/>
</dbReference>
<dbReference type="Gene3D" id="3.30.70.330">
    <property type="match status" value="1"/>
</dbReference>
<dbReference type="InterPro" id="IPR012677">
    <property type="entry name" value="Nucleotide-bd_a/b_plait_sf"/>
</dbReference>
<dbReference type="InterPro" id="IPR035979">
    <property type="entry name" value="RBD_domain_sf"/>
</dbReference>
<dbReference type="InterPro" id="IPR008111">
    <property type="entry name" value="RNA-bd_8"/>
</dbReference>
<dbReference type="InterPro" id="IPR000504">
    <property type="entry name" value="RRM_dom"/>
</dbReference>
<dbReference type="InterPro" id="IPR033744">
    <property type="entry name" value="RRM_RBM8"/>
</dbReference>
<dbReference type="PANTHER" id="PTHR45894">
    <property type="entry name" value="RNA-BINDING PROTEIN 8A"/>
    <property type="match status" value="1"/>
</dbReference>
<dbReference type="Pfam" id="PF00076">
    <property type="entry name" value="RRM_1"/>
    <property type="match status" value="1"/>
</dbReference>
<dbReference type="PRINTS" id="PR01738">
    <property type="entry name" value="RNABINDINGM8"/>
</dbReference>
<dbReference type="SMART" id="SM00360">
    <property type="entry name" value="RRM"/>
    <property type="match status" value="1"/>
</dbReference>
<dbReference type="SUPFAM" id="SSF54928">
    <property type="entry name" value="RNA-binding domain, RBD"/>
    <property type="match status" value="1"/>
</dbReference>
<dbReference type="PROSITE" id="PS50102">
    <property type="entry name" value="RRM"/>
    <property type="match status" value="1"/>
</dbReference>
<gene>
    <name type="primary">Rbm8a</name>
    <name type="synonym">Rbm8</name>
</gene>
<proteinExistence type="evidence at protein level"/>
<organism>
    <name type="scientific">Mus musculus</name>
    <name type="common">Mouse</name>
    <dbReference type="NCBI Taxonomy" id="10090"/>
    <lineage>
        <taxon>Eukaryota</taxon>
        <taxon>Metazoa</taxon>
        <taxon>Chordata</taxon>
        <taxon>Craniata</taxon>
        <taxon>Vertebrata</taxon>
        <taxon>Euteleostomi</taxon>
        <taxon>Mammalia</taxon>
        <taxon>Eutheria</taxon>
        <taxon>Euarchontoglires</taxon>
        <taxon>Glires</taxon>
        <taxon>Rodentia</taxon>
        <taxon>Myomorpha</taxon>
        <taxon>Muroidea</taxon>
        <taxon>Muridae</taxon>
        <taxon>Murinae</taxon>
        <taxon>Mus</taxon>
        <taxon>Mus</taxon>
    </lineage>
</organism>
<protein>
    <recommendedName>
        <fullName>RNA-binding protein 8A</fullName>
    </recommendedName>
    <alternativeName>
        <fullName>RNA-binding motif protein 8A</fullName>
    </alternativeName>
    <alternativeName>
        <fullName>Ribonucleoprotein RBM8A</fullName>
    </alternativeName>
</protein>
<accession>Q9CWZ3</accession>
<accession>A0A023T672</accession>
<accession>Q3UT38</accession>
<accession>Q6GTD4</accession>
<accession>Q9D6U5</accession>
<comment type="function">
    <text evidence="1">Required for pre-mRNA splicing as component of the spliceosome (By similarity). Core component of the splicing-dependent multiprotein exon junction complex (EJC) deposited at splice junctions on mRNAs. The EJC is a dynamic structure consisting of core proteins and several peripheral nuclear and cytoplasmic associated factors that join the complex only transiently either during EJC assembly or during subsequent mRNA metabolism. The EJC marks the position of the exon-exon junction in the mature mRNA for the gene expression machinery and the core components remain bound to spliced mRNAs throughout all stages of mRNA metabolism thereby influencing downstream processes including nuclear mRNA export, subcellular mRNA localization, translation efficiency and nonsense-mediated mRNA decay (NMD). Its removal from cytoplasmic mRNAs requires translation initiation from EJC-bearing spliced mRNAs. Associates preferentially with mRNAs produced by splicing. Does not interact with pre-mRNAs, introns, or mRNAs produced from intronless cDNAs. Associates with both nuclear mRNAs and newly exported cytoplasmic mRNAs (By similarity).</text>
</comment>
<comment type="subunit">
    <text evidence="1">Heterodimer with either MAGOH or MAGOHB. Part of the mRNA splicing-dependent exon junction complex (EJC) complex; the core complex contains CASC3, EIF4A3, MAGOH or MAGOHB, and RBM8A. Component of the ALYREF/THOC4-EJC-RNA complex; in the complex interacts with EIF4A3 and MAGOH; these interactions are likely specific to RNA-bound EJC (By similarity). Interacts with PYM1; the interaction is direct and dissociates the EJC from spliced mRNAs. Part of a complex that contains the EJC core components CASC3, EIF4A3, MAGOH and RBM8A plus proteins involved in nonsense-mediated mRNA decay, such as UPF1, UPF2, UPF3A and UPF3B. Found in a post-splicing complex with NXF1, MAGOH, UPF1, UPF2, UPF3A, UPF3B and RNPS1. Interacts with DDX39B, MAGOH, DPH1, UPF3B, RNPS1, SRRM1 and ALYREF/THOC4. Interacts with IPO13; the interaction mediates the nuclear import of the MAGOH-RBM8A heterodimer. Identified in the spliceosome C complex. Associates with polysomes.</text>
</comment>
<comment type="subcellular location">
    <subcellularLocation>
        <location evidence="1">Nucleus</location>
    </subcellularLocation>
    <subcellularLocation>
        <location evidence="1">Nucleus speckle</location>
    </subcellularLocation>
    <subcellularLocation>
        <location evidence="1">Cytoplasm</location>
    </subcellularLocation>
    <text evidence="1">Nucleocytoplasmic shuttling protein. Travels to the cytoplasm as part of the exon junction complex (EJC) bound to mRNA. Colocalizes with the core EJC, ALYREF/THOC4, NXF1 and UAP56 in the nucleus and nuclear speckles.</text>
</comment>
<comment type="alternative products">
    <event type="alternative splicing"/>
    <isoform>
        <id>Q9CWZ3-1</id>
        <name>1</name>
        <sequence type="displayed"/>
    </isoform>
    <isoform>
        <id>Q9CWZ3-2</id>
        <name>2</name>
        <sequence type="described" ref="VSP_010251"/>
    </isoform>
</comment>
<comment type="similarity">
    <text evidence="6">Belongs to the RBM8A family.</text>
</comment>
<keyword id="KW-0007">Acetylation</keyword>
<keyword id="KW-0025">Alternative splicing</keyword>
<keyword id="KW-0963">Cytoplasm</keyword>
<keyword id="KW-1017">Isopeptide bond</keyword>
<keyword id="KW-0507">mRNA processing</keyword>
<keyword id="KW-0508">mRNA splicing</keyword>
<keyword id="KW-0509">mRNA transport</keyword>
<keyword id="KW-0866">Nonsense-mediated mRNA decay</keyword>
<keyword id="KW-0539">Nucleus</keyword>
<keyword id="KW-0597">Phosphoprotein</keyword>
<keyword id="KW-1185">Reference proteome</keyword>
<keyword id="KW-0694">RNA-binding</keyword>
<keyword id="KW-0747">Spliceosome</keyword>
<keyword id="KW-0810">Translation regulation</keyword>
<keyword id="KW-0813">Transport</keyword>
<keyword id="KW-0832">Ubl conjugation</keyword>
<sequence length="174" mass="19889">MADVLDLHEAGGEDFAMDEDGDESIHKLKEKAKKRKGRGFGSEEGSRARMREDYDSVEQDGDEPGPQRSVEGWILFVTGVHEEATEEDIHDKFAEYGEIKNIHLNLDRRTGYLKGYTLVEYETYKEAQAAMEGLNGQDLMGQPISVDWCFVRGPPKGKRRGGRRRSRSPDRRRR</sequence>
<evidence type="ECO:0000250" key="1">
    <source>
        <dbReference type="UniProtKB" id="Q9Y5S9"/>
    </source>
</evidence>
<evidence type="ECO:0000255" key="2">
    <source>
        <dbReference type="PROSITE-ProRule" id="PRU00176"/>
    </source>
</evidence>
<evidence type="ECO:0000256" key="3">
    <source>
        <dbReference type="SAM" id="MobiDB-lite"/>
    </source>
</evidence>
<evidence type="ECO:0000303" key="4">
    <source>
    </source>
</evidence>
<evidence type="ECO:0000303" key="5">
    <source>
    </source>
</evidence>
<evidence type="ECO:0000305" key="6"/>
<evidence type="ECO:0007744" key="7">
    <source>
    </source>
</evidence>
<name>RBM8A_MOUSE</name>